<name>RL10_BACLD</name>
<keyword id="KW-1185">Reference proteome</keyword>
<keyword id="KW-0687">Ribonucleoprotein</keyword>
<keyword id="KW-0689">Ribosomal protein</keyword>
<keyword id="KW-0694">RNA-binding</keyword>
<keyword id="KW-0699">rRNA-binding</keyword>
<proteinExistence type="inferred from homology"/>
<evidence type="ECO:0000255" key="1">
    <source>
        <dbReference type="HAMAP-Rule" id="MF_00362"/>
    </source>
</evidence>
<evidence type="ECO:0000305" key="2"/>
<sequence length="166" mass="18152">MSSAIETKKVVVEEITSKLKESKSTIIVDYRGLNVAEVTELRKQLREANVEFKVYKNTMTRRAVEQAELDGLNDFLTGPNAIAFSTEDVVAPAKVLNEFAKKHEALEIKAGVIEGKVSTVEEVKALAELPSREGLLSMLLSVLQAPVRNLALATKAVAEQKEEQGA</sequence>
<organism>
    <name type="scientific">Bacillus licheniformis (strain ATCC 14580 / DSM 13 / JCM 2505 / CCUG 7422 / NBRC 12200 / NCIMB 9375 / NCTC 10341 / NRRL NRS-1264 / Gibson 46)</name>
    <dbReference type="NCBI Taxonomy" id="279010"/>
    <lineage>
        <taxon>Bacteria</taxon>
        <taxon>Bacillati</taxon>
        <taxon>Bacillota</taxon>
        <taxon>Bacilli</taxon>
        <taxon>Bacillales</taxon>
        <taxon>Bacillaceae</taxon>
        <taxon>Bacillus</taxon>
    </lineage>
</organism>
<comment type="function">
    <text evidence="1">Forms part of the ribosomal stalk, playing a central role in the interaction of the ribosome with GTP-bound translation factors.</text>
</comment>
<comment type="subunit">
    <text evidence="1">Part of the ribosomal stalk of the 50S ribosomal subunit. The N-terminus interacts with L11 and the large rRNA to form the base of the stalk. The C-terminus forms an elongated spine to which L12 dimers bind in a sequential fashion forming a multimeric L10(L12)X complex.</text>
</comment>
<comment type="similarity">
    <text evidence="1">Belongs to the universal ribosomal protein uL10 family.</text>
</comment>
<feature type="chain" id="PRO_0000234834" description="Large ribosomal subunit protein uL10">
    <location>
        <begin position="1"/>
        <end position="166"/>
    </location>
</feature>
<reference key="1">
    <citation type="journal article" date="2004" name="J. Mol. Microbiol. Biotechnol.">
        <title>The complete genome sequence of Bacillus licheniformis DSM13, an organism with great industrial potential.</title>
        <authorList>
            <person name="Veith B."/>
            <person name="Herzberg C."/>
            <person name="Steckel S."/>
            <person name="Feesche J."/>
            <person name="Maurer K.H."/>
            <person name="Ehrenreich P."/>
            <person name="Baeumer S."/>
            <person name="Henne A."/>
            <person name="Liesegang H."/>
            <person name="Merkl R."/>
            <person name="Ehrenreich A."/>
            <person name="Gottschalk G."/>
        </authorList>
    </citation>
    <scope>NUCLEOTIDE SEQUENCE [LARGE SCALE GENOMIC DNA]</scope>
    <source>
        <strain>ATCC 14580 / DSM 13 / JCM 2505 / CCUG 7422 / NBRC 12200 / NCIMB 9375 / NCTC 10341 / NRRL NRS-1264 / Gibson 46</strain>
    </source>
</reference>
<reference key="2">
    <citation type="journal article" date="2004" name="Genome Biol.">
        <title>Complete genome sequence of the industrial bacterium Bacillus licheniformis and comparisons with closely related Bacillus species.</title>
        <authorList>
            <person name="Rey M.W."/>
            <person name="Ramaiya P."/>
            <person name="Nelson B.A."/>
            <person name="Brody-Karpin S.D."/>
            <person name="Zaretsky E.J."/>
            <person name="Tang M."/>
            <person name="Lopez de Leon A."/>
            <person name="Xiang H."/>
            <person name="Gusti V."/>
            <person name="Clausen I.G."/>
            <person name="Olsen P.B."/>
            <person name="Rasmussen M.D."/>
            <person name="Andersen J.T."/>
            <person name="Joergensen P.L."/>
            <person name="Larsen T.S."/>
            <person name="Sorokin A."/>
            <person name="Bolotin A."/>
            <person name="Lapidus A."/>
            <person name="Galleron N."/>
            <person name="Ehrlich S.D."/>
            <person name="Berka R.M."/>
        </authorList>
    </citation>
    <scope>NUCLEOTIDE SEQUENCE [LARGE SCALE GENOMIC DNA]</scope>
    <source>
        <strain>ATCC 14580 / DSM 13 / JCM 2505 / CCUG 7422 / NBRC 12200 / NCIMB 9375 / NCTC 10341 / NRRL NRS-1264 / Gibson 46</strain>
    </source>
</reference>
<dbReference type="EMBL" id="AE017333">
    <property type="protein sequence ID" value="AAU39096.1"/>
    <property type="molecule type" value="Genomic_DNA"/>
</dbReference>
<dbReference type="EMBL" id="CP000002">
    <property type="protein sequence ID" value="AAU21751.2"/>
    <property type="molecule type" value="Genomic_DNA"/>
</dbReference>
<dbReference type="RefSeq" id="WP_003178304.1">
    <property type="nucleotide sequence ID" value="NC_006322.1"/>
</dbReference>
<dbReference type="SMR" id="Q65PB8"/>
<dbReference type="STRING" id="279010.BL02801"/>
<dbReference type="GeneID" id="92858914"/>
<dbReference type="KEGG" id="bld:BLi00122"/>
<dbReference type="KEGG" id="bli:BL02801"/>
<dbReference type="eggNOG" id="COG0244">
    <property type="taxonomic scope" value="Bacteria"/>
</dbReference>
<dbReference type="HOGENOM" id="CLU_092227_2_0_9"/>
<dbReference type="Proteomes" id="UP000000606">
    <property type="component" value="Chromosome"/>
</dbReference>
<dbReference type="GO" id="GO:0015934">
    <property type="term" value="C:large ribosomal subunit"/>
    <property type="evidence" value="ECO:0007669"/>
    <property type="project" value="InterPro"/>
</dbReference>
<dbReference type="GO" id="GO:0070180">
    <property type="term" value="F:large ribosomal subunit rRNA binding"/>
    <property type="evidence" value="ECO:0007669"/>
    <property type="project" value="UniProtKB-UniRule"/>
</dbReference>
<dbReference type="GO" id="GO:0003735">
    <property type="term" value="F:structural constituent of ribosome"/>
    <property type="evidence" value="ECO:0007669"/>
    <property type="project" value="InterPro"/>
</dbReference>
<dbReference type="GO" id="GO:0006412">
    <property type="term" value="P:translation"/>
    <property type="evidence" value="ECO:0007669"/>
    <property type="project" value="UniProtKB-UniRule"/>
</dbReference>
<dbReference type="CDD" id="cd05797">
    <property type="entry name" value="Ribosomal_L10"/>
    <property type="match status" value="1"/>
</dbReference>
<dbReference type="FunFam" id="3.30.70.1730:FF:000001">
    <property type="entry name" value="50S ribosomal protein L10"/>
    <property type="match status" value="1"/>
</dbReference>
<dbReference type="Gene3D" id="3.30.70.1730">
    <property type="match status" value="1"/>
</dbReference>
<dbReference type="Gene3D" id="6.10.250.290">
    <property type="match status" value="1"/>
</dbReference>
<dbReference type="HAMAP" id="MF_00362">
    <property type="entry name" value="Ribosomal_uL10"/>
    <property type="match status" value="1"/>
</dbReference>
<dbReference type="InterPro" id="IPR001790">
    <property type="entry name" value="Ribosomal_uL10"/>
</dbReference>
<dbReference type="InterPro" id="IPR043141">
    <property type="entry name" value="Ribosomal_uL10-like_sf"/>
</dbReference>
<dbReference type="InterPro" id="IPR022973">
    <property type="entry name" value="Ribosomal_uL10_bac"/>
</dbReference>
<dbReference type="InterPro" id="IPR047865">
    <property type="entry name" value="Ribosomal_uL10_bac_type"/>
</dbReference>
<dbReference type="InterPro" id="IPR002363">
    <property type="entry name" value="Ribosomal_uL10_CS_bac"/>
</dbReference>
<dbReference type="NCBIfam" id="NF000955">
    <property type="entry name" value="PRK00099.1-1"/>
    <property type="match status" value="1"/>
</dbReference>
<dbReference type="PANTHER" id="PTHR11560">
    <property type="entry name" value="39S RIBOSOMAL PROTEIN L10, MITOCHONDRIAL"/>
    <property type="match status" value="1"/>
</dbReference>
<dbReference type="Pfam" id="PF00466">
    <property type="entry name" value="Ribosomal_L10"/>
    <property type="match status" value="1"/>
</dbReference>
<dbReference type="SUPFAM" id="SSF160369">
    <property type="entry name" value="Ribosomal protein L10-like"/>
    <property type="match status" value="1"/>
</dbReference>
<dbReference type="PROSITE" id="PS01109">
    <property type="entry name" value="RIBOSOMAL_L10"/>
    <property type="match status" value="1"/>
</dbReference>
<gene>
    <name evidence="1" type="primary">rplJ</name>
    <name type="ordered locus">BLi00122</name>
    <name type="ordered locus">BL02801</name>
</gene>
<accession>Q65PB8</accession>
<accession>Q62ZQ7</accession>
<protein>
    <recommendedName>
        <fullName evidence="1">Large ribosomal subunit protein uL10</fullName>
    </recommendedName>
    <alternativeName>
        <fullName evidence="2">50S ribosomal protein L10</fullName>
    </alternativeName>
</protein>